<gene>
    <name type="ordered locus">HI_1493</name>
</gene>
<proteinExistence type="predicted"/>
<organism>
    <name type="scientific">Haemophilus influenzae (strain ATCC 51907 / DSM 11121 / KW20 / Rd)</name>
    <dbReference type="NCBI Taxonomy" id="71421"/>
    <lineage>
        <taxon>Bacteria</taxon>
        <taxon>Pseudomonadati</taxon>
        <taxon>Pseudomonadota</taxon>
        <taxon>Gammaproteobacteria</taxon>
        <taxon>Pasteurellales</taxon>
        <taxon>Pasteurellaceae</taxon>
        <taxon>Haemophilus</taxon>
    </lineage>
</organism>
<keyword id="KW-1185">Reference proteome</keyword>
<protein>
    <recommendedName>
        <fullName>Uncharacterized protein HI_1493</fullName>
    </recommendedName>
</protein>
<dbReference type="EMBL" id="L42023">
    <property type="protein sequence ID" value="AAC23145.1"/>
    <property type="molecule type" value="Genomic_DNA"/>
</dbReference>
<dbReference type="PIR" id="C64032">
    <property type="entry name" value="C64032"/>
</dbReference>
<dbReference type="RefSeq" id="NP_439642.1">
    <property type="nucleotide sequence ID" value="NC_000907.1"/>
</dbReference>
<dbReference type="SMR" id="P44218"/>
<dbReference type="STRING" id="71421.HI_1493"/>
<dbReference type="EnsemblBacteria" id="AAC23145">
    <property type="protein sequence ID" value="AAC23145"/>
    <property type="gene ID" value="HI_1493"/>
</dbReference>
<dbReference type="KEGG" id="hin:HI_1493"/>
<dbReference type="PATRIC" id="fig|71421.8.peg.1561"/>
<dbReference type="eggNOG" id="COG3023">
    <property type="taxonomic scope" value="Bacteria"/>
</dbReference>
<dbReference type="HOGENOM" id="CLU_2382095_0_0_6"/>
<dbReference type="OrthoDB" id="8754850at2"/>
<dbReference type="BioCyc" id="HINF71421:G1GJ1-1516-MONOMER"/>
<dbReference type="Proteomes" id="UP000000579">
    <property type="component" value="Chromosome"/>
</dbReference>
<sequence length="94" mass="10506">MSLPITKIVVHCSATRNGKSIKQPGKNAAQVIDGWHKQRGFKRQLSSQRAFNPHLSSIVITLSLMWTAQSEPVAKWAKLVHTLRGTTKIQWGFA</sequence>
<feature type="chain" id="PRO_0000078074" description="Uncharacterized protein HI_1493">
    <location>
        <begin position="1"/>
        <end position="94"/>
    </location>
</feature>
<name>Y1493_HAEIN</name>
<accession>P44218</accession>
<reference key="1">
    <citation type="journal article" date="1995" name="Science">
        <title>Whole-genome random sequencing and assembly of Haemophilus influenzae Rd.</title>
        <authorList>
            <person name="Fleischmann R.D."/>
            <person name="Adams M.D."/>
            <person name="White O."/>
            <person name="Clayton R.A."/>
            <person name="Kirkness E.F."/>
            <person name="Kerlavage A.R."/>
            <person name="Bult C.J."/>
            <person name="Tomb J.-F."/>
            <person name="Dougherty B.A."/>
            <person name="Merrick J.M."/>
            <person name="McKenney K."/>
            <person name="Sutton G.G."/>
            <person name="FitzHugh W."/>
            <person name="Fields C.A."/>
            <person name="Gocayne J.D."/>
            <person name="Scott J.D."/>
            <person name="Shirley R."/>
            <person name="Liu L.-I."/>
            <person name="Glodek A."/>
            <person name="Kelley J.M."/>
            <person name="Weidman J.F."/>
            <person name="Phillips C.A."/>
            <person name="Spriggs T."/>
            <person name="Hedblom E."/>
            <person name="Cotton M.D."/>
            <person name="Utterback T.R."/>
            <person name="Hanna M.C."/>
            <person name="Nguyen D.T."/>
            <person name="Saudek D.M."/>
            <person name="Brandon R.C."/>
            <person name="Fine L.D."/>
            <person name="Fritchman J.L."/>
            <person name="Fuhrmann J.L."/>
            <person name="Geoghagen N.S.M."/>
            <person name="Gnehm C.L."/>
            <person name="McDonald L.A."/>
            <person name="Small K.V."/>
            <person name="Fraser C.M."/>
            <person name="Smith H.O."/>
            <person name="Venter J.C."/>
        </authorList>
    </citation>
    <scope>NUCLEOTIDE SEQUENCE [LARGE SCALE GENOMIC DNA]</scope>
    <source>
        <strain>ATCC 51907 / DSM 11121 / KW20 / Rd</strain>
    </source>
</reference>